<dbReference type="EC" id="7.6.2.1"/>
<dbReference type="EMBL" id="CU329670">
    <property type="protein sequence ID" value="CAA91777.1"/>
    <property type="molecule type" value="Genomic_DNA"/>
</dbReference>
<dbReference type="EMBL" id="AB027875">
    <property type="protein sequence ID" value="BAA87179.1"/>
    <property type="molecule type" value="Genomic_DNA"/>
</dbReference>
<dbReference type="PIR" id="T38339">
    <property type="entry name" value="S62557"/>
</dbReference>
<dbReference type="RefSeq" id="NP_592849.1">
    <property type="nucleotide sequence ID" value="NM_001018250.2"/>
</dbReference>
<dbReference type="SMR" id="Q09891"/>
<dbReference type="BioGRID" id="278059">
    <property type="interactions" value="31"/>
</dbReference>
<dbReference type="FunCoup" id="Q09891">
    <property type="interactions" value="67"/>
</dbReference>
<dbReference type="STRING" id="284812.Q09891"/>
<dbReference type="iPTMnet" id="Q09891"/>
<dbReference type="PaxDb" id="4896-SPAC24B11.12c.1"/>
<dbReference type="EnsemblFungi" id="SPAC24B11.12c.1">
    <property type="protein sequence ID" value="SPAC24B11.12c.1:pep"/>
    <property type="gene ID" value="SPAC24B11.12c"/>
</dbReference>
<dbReference type="GeneID" id="2541560"/>
<dbReference type="KEGG" id="spo:2541560"/>
<dbReference type="PomBase" id="SPAC24B11.12c">
    <property type="gene designation" value="dnf2"/>
</dbReference>
<dbReference type="VEuPathDB" id="FungiDB:SPAC24B11.12c"/>
<dbReference type="eggNOG" id="KOG0206">
    <property type="taxonomic scope" value="Eukaryota"/>
</dbReference>
<dbReference type="HOGENOM" id="CLU_000846_5_2_1"/>
<dbReference type="InParanoid" id="Q09891"/>
<dbReference type="OMA" id="QALRCGR"/>
<dbReference type="PhylomeDB" id="Q09891"/>
<dbReference type="Reactome" id="R-SPO-6798695">
    <property type="pathway name" value="Neutrophil degranulation"/>
</dbReference>
<dbReference type="Reactome" id="R-SPO-936837">
    <property type="pathway name" value="Ion transport by P-type ATPases"/>
</dbReference>
<dbReference type="PRO" id="PR:Q09891"/>
<dbReference type="Proteomes" id="UP000002485">
    <property type="component" value="Chromosome I"/>
</dbReference>
<dbReference type="GO" id="GO:0005783">
    <property type="term" value="C:endoplasmic reticulum"/>
    <property type="evidence" value="ECO:0007005"/>
    <property type="project" value="PomBase"/>
</dbReference>
<dbReference type="GO" id="GO:0005789">
    <property type="term" value="C:endoplasmic reticulum membrane"/>
    <property type="evidence" value="ECO:0007669"/>
    <property type="project" value="UniProtKB-SubCell"/>
</dbReference>
<dbReference type="GO" id="GO:1990531">
    <property type="term" value="C:phospholipid-translocating ATPase complex"/>
    <property type="evidence" value="ECO:0000266"/>
    <property type="project" value="PomBase"/>
</dbReference>
<dbReference type="GO" id="GO:0005886">
    <property type="term" value="C:plasma membrane"/>
    <property type="evidence" value="ECO:0000318"/>
    <property type="project" value="GO_Central"/>
</dbReference>
<dbReference type="GO" id="GO:0005524">
    <property type="term" value="F:ATP binding"/>
    <property type="evidence" value="ECO:0007669"/>
    <property type="project" value="UniProtKB-KW"/>
</dbReference>
<dbReference type="GO" id="GO:0016887">
    <property type="term" value="F:ATP hydrolysis activity"/>
    <property type="evidence" value="ECO:0007669"/>
    <property type="project" value="InterPro"/>
</dbReference>
<dbReference type="GO" id="GO:0140326">
    <property type="term" value="F:ATPase-coupled intramembrane lipid transporter activity"/>
    <property type="evidence" value="ECO:0000318"/>
    <property type="project" value="GO_Central"/>
</dbReference>
<dbReference type="GO" id="GO:0140351">
    <property type="term" value="F:glycosylceramide flippase activity"/>
    <property type="evidence" value="ECO:0000314"/>
    <property type="project" value="PomBase"/>
</dbReference>
<dbReference type="GO" id="GO:0000287">
    <property type="term" value="F:magnesium ion binding"/>
    <property type="evidence" value="ECO:0007669"/>
    <property type="project" value="InterPro"/>
</dbReference>
<dbReference type="GO" id="GO:0140345">
    <property type="term" value="F:phosphatidylcholine flippase activity"/>
    <property type="evidence" value="ECO:0000250"/>
    <property type="project" value="UniProtKB"/>
</dbReference>
<dbReference type="GO" id="GO:0090554">
    <property type="term" value="F:phosphatidylcholine floppase activity"/>
    <property type="evidence" value="ECO:0007669"/>
    <property type="project" value="RHEA"/>
</dbReference>
<dbReference type="GO" id="GO:0090555">
    <property type="term" value="F:phosphatidylethanolamine flippase activity"/>
    <property type="evidence" value="ECO:0000250"/>
    <property type="project" value="UniProtKB"/>
</dbReference>
<dbReference type="GO" id="GO:0090556">
    <property type="term" value="F:phosphatidylserine floppase activity"/>
    <property type="evidence" value="ECO:0007669"/>
    <property type="project" value="RHEA"/>
</dbReference>
<dbReference type="GO" id="GO:0034203">
    <property type="term" value="P:glycolipid translocation"/>
    <property type="evidence" value="ECO:0000314"/>
    <property type="project" value="PomBase"/>
</dbReference>
<dbReference type="GO" id="GO:0045332">
    <property type="term" value="P:phospholipid translocation"/>
    <property type="evidence" value="ECO:0000250"/>
    <property type="project" value="UniProtKB"/>
</dbReference>
<dbReference type="CDD" id="cd02073">
    <property type="entry name" value="P-type_ATPase_APLT_Dnf-like"/>
    <property type="match status" value="1"/>
</dbReference>
<dbReference type="FunFam" id="3.40.1110.10:FF:000087">
    <property type="entry name" value="Phospholipid-transporting ATPase"/>
    <property type="match status" value="1"/>
</dbReference>
<dbReference type="FunFam" id="3.40.50.1000:FF:000108">
    <property type="entry name" value="Phospholipid-transporting ATPase"/>
    <property type="match status" value="1"/>
</dbReference>
<dbReference type="FunFam" id="3.40.50.1000:FF:000001">
    <property type="entry name" value="Phospholipid-transporting ATPase IC"/>
    <property type="match status" value="1"/>
</dbReference>
<dbReference type="Gene3D" id="3.40.1110.10">
    <property type="entry name" value="Calcium-transporting ATPase, cytoplasmic domain N"/>
    <property type="match status" value="1"/>
</dbReference>
<dbReference type="Gene3D" id="2.70.150.10">
    <property type="entry name" value="Calcium-transporting ATPase, cytoplasmic transduction domain A"/>
    <property type="match status" value="1"/>
</dbReference>
<dbReference type="Gene3D" id="3.40.50.1000">
    <property type="entry name" value="HAD superfamily/HAD-like"/>
    <property type="match status" value="1"/>
</dbReference>
<dbReference type="InterPro" id="IPR023299">
    <property type="entry name" value="ATPase_P-typ_cyto_dom_N"/>
</dbReference>
<dbReference type="InterPro" id="IPR018303">
    <property type="entry name" value="ATPase_P-typ_P_site"/>
</dbReference>
<dbReference type="InterPro" id="IPR023298">
    <property type="entry name" value="ATPase_P-typ_TM_dom_sf"/>
</dbReference>
<dbReference type="InterPro" id="IPR008250">
    <property type="entry name" value="ATPase_P-typ_transduc_dom_A_sf"/>
</dbReference>
<dbReference type="InterPro" id="IPR036412">
    <property type="entry name" value="HAD-like_sf"/>
</dbReference>
<dbReference type="InterPro" id="IPR023214">
    <property type="entry name" value="HAD_sf"/>
</dbReference>
<dbReference type="InterPro" id="IPR006539">
    <property type="entry name" value="P-type_ATPase_IV"/>
</dbReference>
<dbReference type="InterPro" id="IPR032631">
    <property type="entry name" value="P-type_ATPase_N"/>
</dbReference>
<dbReference type="InterPro" id="IPR001757">
    <property type="entry name" value="P_typ_ATPase"/>
</dbReference>
<dbReference type="InterPro" id="IPR032630">
    <property type="entry name" value="P_typ_ATPase_c"/>
</dbReference>
<dbReference type="InterPro" id="IPR044492">
    <property type="entry name" value="P_typ_ATPase_HD_dom"/>
</dbReference>
<dbReference type="NCBIfam" id="TIGR01652">
    <property type="entry name" value="ATPase-Plipid"/>
    <property type="match status" value="1"/>
</dbReference>
<dbReference type="NCBIfam" id="TIGR01494">
    <property type="entry name" value="ATPase_P-type"/>
    <property type="match status" value="2"/>
</dbReference>
<dbReference type="PANTHER" id="PTHR24092:SF180">
    <property type="entry name" value="PHOSPHOLIPID-TRANSPORTING ATPASE DNF1-RELATED"/>
    <property type="match status" value="1"/>
</dbReference>
<dbReference type="PANTHER" id="PTHR24092">
    <property type="entry name" value="PROBABLE PHOSPHOLIPID-TRANSPORTING ATPASE"/>
    <property type="match status" value="1"/>
</dbReference>
<dbReference type="Pfam" id="PF13246">
    <property type="entry name" value="Cation_ATPase"/>
    <property type="match status" value="1"/>
</dbReference>
<dbReference type="Pfam" id="PF16212">
    <property type="entry name" value="PhoLip_ATPase_C"/>
    <property type="match status" value="1"/>
</dbReference>
<dbReference type="Pfam" id="PF16209">
    <property type="entry name" value="PhoLip_ATPase_N"/>
    <property type="match status" value="1"/>
</dbReference>
<dbReference type="PRINTS" id="PR00119">
    <property type="entry name" value="CATATPASE"/>
</dbReference>
<dbReference type="SFLD" id="SFLDG00002">
    <property type="entry name" value="C1.7:_P-type_atpase_like"/>
    <property type="match status" value="1"/>
</dbReference>
<dbReference type="SFLD" id="SFLDF00027">
    <property type="entry name" value="p-type_atpase"/>
    <property type="match status" value="1"/>
</dbReference>
<dbReference type="SUPFAM" id="SSF81653">
    <property type="entry name" value="Calcium ATPase, transduction domain A"/>
    <property type="match status" value="1"/>
</dbReference>
<dbReference type="SUPFAM" id="SSF81665">
    <property type="entry name" value="Calcium ATPase, transmembrane domain M"/>
    <property type="match status" value="1"/>
</dbReference>
<dbReference type="SUPFAM" id="SSF56784">
    <property type="entry name" value="HAD-like"/>
    <property type="match status" value="1"/>
</dbReference>
<dbReference type="SUPFAM" id="SSF81660">
    <property type="entry name" value="Metal cation-transporting ATPase, ATP-binding domain N"/>
    <property type="match status" value="1"/>
</dbReference>
<dbReference type="PROSITE" id="PS00154">
    <property type="entry name" value="ATPASE_E1_E2"/>
    <property type="match status" value="1"/>
</dbReference>
<reference key="1">
    <citation type="journal article" date="2002" name="Nature">
        <title>The genome sequence of Schizosaccharomyces pombe.</title>
        <authorList>
            <person name="Wood V."/>
            <person name="Gwilliam R."/>
            <person name="Rajandream M.A."/>
            <person name="Lyne M.H."/>
            <person name="Lyne R."/>
            <person name="Stewart A."/>
            <person name="Sgouros J.G."/>
            <person name="Peat N."/>
            <person name="Hayles J."/>
            <person name="Baker S.G."/>
            <person name="Basham D."/>
            <person name="Bowman S."/>
            <person name="Brooks K."/>
            <person name="Brown D."/>
            <person name="Brown S."/>
            <person name="Chillingworth T."/>
            <person name="Churcher C.M."/>
            <person name="Collins M."/>
            <person name="Connor R."/>
            <person name="Cronin A."/>
            <person name="Davis P."/>
            <person name="Feltwell T."/>
            <person name="Fraser A."/>
            <person name="Gentles S."/>
            <person name="Goble A."/>
            <person name="Hamlin N."/>
            <person name="Harris D.E."/>
            <person name="Hidalgo J."/>
            <person name="Hodgson G."/>
            <person name="Holroyd S."/>
            <person name="Hornsby T."/>
            <person name="Howarth S."/>
            <person name="Huckle E.J."/>
            <person name="Hunt S."/>
            <person name="Jagels K."/>
            <person name="James K.D."/>
            <person name="Jones L."/>
            <person name="Jones M."/>
            <person name="Leather S."/>
            <person name="McDonald S."/>
            <person name="McLean J."/>
            <person name="Mooney P."/>
            <person name="Moule S."/>
            <person name="Mungall K.L."/>
            <person name="Murphy L.D."/>
            <person name="Niblett D."/>
            <person name="Odell C."/>
            <person name="Oliver K."/>
            <person name="O'Neil S."/>
            <person name="Pearson D."/>
            <person name="Quail M.A."/>
            <person name="Rabbinowitsch E."/>
            <person name="Rutherford K.M."/>
            <person name="Rutter S."/>
            <person name="Saunders D."/>
            <person name="Seeger K."/>
            <person name="Sharp S."/>
            <person name="Skelton J."/>
            <person name="Simmonds M.N."/>
            <person name="Squares R."/>
            <person name="Squares S."/>
            <person name="Stevens K."/>
            <person name="Taylor K."/>
            <person name="Taylor R.G."/>
            <person name="Tivey A."/>
            <person name="Walsh S.V."/>
            <person name="Warren T."/>
            <person name="Whitehead S."/>
            <person name="Woodward J.R."/>
            <person name="Volckaert G."/>
            <person name="Aert R."/>
            <person name="Robben J."/>
            <person name="Grymonprez B."/>
            <person name="Weltjens I."/>
            <person name="Vanstreels E."/>
            <person name="Rieger M."/>
            <person name="Schaefer M."/>
            <person name="Mueller-Auer S."/>
            <person name="Gabel C."/>
            <person name="Fuchs M."/>
            <person name="Duesterhoeft A."/>
            <person name="Fritzc C."/>
            <person name="Holzer E."/>
            <person name="Moestl D."/>
            <person name="Hilbert H."/>
            <person name="Borzym K."/>
            <person name="Langer I."/>
            <person name="Beck A."/>
            <person name="Lehrach H."/>
            <person name="Reinhardt R."/>
            <person name="Pohl T.M."/>
            <person name="Eger P."/>
            <person name="Zimmermann W."/>
            <person name="Wedler H."/>
            <person name="Wambutt R."/>
            <person name="Purnelle B."/>
            <person name="Goffeau A."/>
            <person name="Cadieu E."/>
            <person name="Dreano S."/>
            <person name="Gloux S."/>
            <person name="Lelaure V."/>
            <person name="Mottier S."/>
            <person name="Galibert F."/>
            <person name="Aves S.J."/>
            <person name="Xiang Z."/>
            <person name="Hunt C."/>
            <person name="Moore K."/>
            <person name="Hurst S.M."/>
            <person name="Lucas M."/>
            <person name="Rochet M."/>
            <person name="Gaillardin C."/>
            <person name="Tallada V.A."/>
            <person name="Garzon A."/>
            <person name="Thode G."/>
            <person name="Daga R.R."/>
            <person name="Cruzado L."/>
            <person name="Jimenez J."/>
            <person name="Sanchez M."/>
            <person name="del Rey F."/>
            <person name="Benito J."/>
            <person name="Dominguez A."/>
            <person name="Revuelta J.L."/>
            <person name="Moreno S."/>
            <person name="Armstrong J."/>
            <person name="Forsburg S.L."/>
            <person name="Cerutti L."/>
            <person name="Lowe T."/>
            <person name="McCombie W.R."/>
            <person name="Paulsen I."/>
            <person name="Potashkin J."/>
            <person name="Shpakovski G.V."/>
            <person name="Ussery D."/>
            <person name="Barrell B.G."/>
            <person name="Nurse P."/>
        </authorList>
    </citation>
    <scope>NUCLEOTIDE SEQUENCE [LARGE SCALE GENOMIC DNA]</scope>
    <source>
        <strain>972 / ATCC 24843</strain>
    </source>
</reference>
<reference key="2">
    <citation type="journal article" date="2000" name="Genes Cells">
        <title>Large-scale screening of intracellular protein localization in living fission yeast cells by the use of a GFP-fusion genomic DNA library.</title>
        <authorList>
            <person name="Ding D.-Q."/>
            <person name="Tomita Y."/>
            <person name="Yamamoto A."/>
            <person name="Chikashige Y."/>
            <person name="Haraguchi T."/>
            <person name="Hiraoka Y."/>
        </authorList>
    </citation>
    <scope>NUCLEOTIDE SEQUENCE [LARGE SCALE GENOMIC DNA] OF 633-855</scope>
    <scope>SUBCELLULAR LOCATION</scope>
    <source>
        <strain>ATCC 38364 / 968</strain>
    </source>
</reference>
<reference key="3">
    <citation type="journal article" date="2006" name="Nat. Biotechnol.">
        <title>ORFeome cloning and global analysis of protein localization in the fission yeast Schizosaccharomyces pombe.</title>
        <authorList>
            <person name="Matsuyama A."/>
            <person name="Arai R."/>
            <person name="Yashiroda Y."/>
            <person name="Shirai A."/>
            <person name="Kamata A."/>
            <person name="Sekido S."/>
            <person name="Kobayashi Y."/>
            <person name="Hashimoto A."/>
            <person name="Hamamoto M."/>
            <person name="Hiraoka Y."/>
            <person name="Horinouchi S."/>
            <person name="Yoshida M."/>
        </authorList>
    </citation>
    <scope>SUBCELLULAR LOCATION [LARGE SCALE ANALYSIS]</scope>
</reference>
<name>ATCX_SCHPO</name>
<gene>
    <name evidence="11" type="primary">dnf2</name>
    <name evidence="11" type="ORF">SPAC24B11.12c</name>
</gene>
<protein>
    <recommendedName>
        <fullName evidence="10">Phospholipid-transporting ATPase dnf2</fullName>
        <ecNumber>7.6.2.1</ecNumber>
    </recommendedName>
</protein>
<proteinExistence type="inferred from homology"/>
<feature type="chain" id="PRO_0000046239" description="Phospholipid-transporting ATPase dnf2">
    <location>
        <begin position="1"/>
        <end position="1402"/>
    </location>
</feature>
<feature type="transmembrane region" description="Helical" evidence="8">
    <location>
        <begin position="109"/>
        <end position="129"/>
    </location>
</feature>
<feature type="transmembrane region" description="Helical" evidence="8">
    <location>
        <begin position="135"/>
        <end position="155"/>
    </location>
</feature>
<feature type="transmembrane region" description="Helical" evidence="8">
    <location>
        <begin position="457"/>
        <end position="477"/>
    </location>
</feature>
<feature type="transmembrane region" description="Helical" evidence="8">
    <location>
        <begin position="501"/>
        <end position="521"/>
    </location>
</feature>
<feature type="transmembrane region" description="Helical" evidence="8">
    <location>
        <begin position="1066"/>
        <end position="1086"/>
    </location>
</feature>
<feature type="transmembrane region" description="Helical" evidence="8">
    <location>
        <begin position="1101"/>
        <end position="1121"/>
    </location>
</feature>
<feature type="transmembrane region" description="Helical" evidence="8">
    <location>
        <begin position="1151"/>
        <end position="1171"/>
    </location>
</feature>
<feature type="transmembrane region" description="Helical" evidence="8">
    <location>
        <begin position="1193"/>
        <end position="1213"/>
    </location>
</feature>
<feature type="transmembrane region" description="Helical" evidence="8">
    <location>
        <begin position="1218"/>
        <end position="1238"/>
    </location>
</feature>
<feature type="transmembrane region" description="Helical" evidence="8">
    <location>
        <begin position="1260"/>
        <end position="1280"/>
    </location>
</feature>
<feature type="active site" description="4-aspartylphosphate intermediate" evidence="7">
    <location>
        <position position="569"/>
    </location>
</feature>
<feature type="binding site" evidence="7">
    <location>
        <position position="569"/>
    </location>
    <ligand>
        <name>ATP</name>
        <dbReference type="ChEBI" id="CHEBI:30616"/>
    </ligand>
</feature>
<feature type="binding site" evidence="7">
    <location>
        <position position="569"/>
    </location>
    <ligand>
        <name>Mg(2+)</name>
        <dbReference type="ChEBI" id="CHEBI:18420"/>
    </ligand>
</feature>
<feature type="binding site" evidence="7">
    <location>
        <position position="570"/>
    </location>
    <ligand>
        <name>ATP</name>
        <dbReference type="ChEBI" id="CHEBI:30616"/>
    </ligand>
</feature>
<feature type="binding site" evidence="5">
    <location>
        <position position="571"/>
    </location>
    <ligand>
        <name>ATP</name>
        <dbReference type="ChEBI" id="CHEBI:30616"/>
    </ligand>
</feature>
<feature type="binding site" evidence="7">
    <location>
        <position position="571"/>
    </location>
    <ligand>
        <name>Mg(2+)</name>
        <dbReference type="ChEBI" id="CHEBI:18420"/>
    </ligand>
</feature>
<feature type="binding site" evidence="3">
    <location>
        <position position="700"/>
    </location>
    <ligand>
        <name>ATP</name>
        <dbReference type="ChEBI" id="CHEBI:30616"/>
    </ligand>
</feature>
<feature type="binding site" evidence="7">
    <location>
        <position position="741"/>
    </location>
    <ligand>
        <name>ATP</name>
        <dbReference type="ChEBI" id="CHEBI:30616"/>
    </ligand>
</feature>
<feature type="binding site" evidence="4">
    <location>
        <position position="743"/>
    </location>
    <ligand>
        <name>ATP</name>
        <dbReference type="ChEBI" id="CHEBI:30616"/>
    </ligand>
</feature>
<feature type="binding site" evidence="5">
    <location>
        <position position="746"/>
    </location>
    <ligand>
        <name>ATP</name>
        <dbReference type="ChEBI" id="CHEBI:30616"/>
    </ligand>
</feature>
<feature type="binding site" evidence="3">
    <location>
        <position position="764"/>
    </location>
    <ligand>
        <name>ATP</name>
        <dbReference type="ChEBI" id="CHEBI:30616"/>
    </ligand>
</feature>
<feature type="binding site" evidence="3">
    <location>
        <position position="799"/>
    </location>
    <ligand>
        <name>ATP</name>
        <dbReference type="ChEBI" id="CHEBI:30616"/>
    </ligand>
</feature>
<feature type="binding site" evidence="5">
    <location>
        <position position="800"/>
    </location>
    <ligand>
        <name>ATP</name>
        <dbReference type="ChEBI" id="CHEBI:30616"/>
    </ligand>
</feature>
<feature type="binding site" evidence="3">
    <location>
        <position position="879"/>
    </location>
    <ligand>
        <name>ATP</name>
        <dbReference type="ChEBI" id="CHEBI:30616"/>
    </ligand>
</feature>
<feature type="binding site" evidence="3">
    <location>
        <position position="880"/>
    </location>
    <ligand>
        <name>ATP</name>
        <dbReference type="ChEBI" id="CHEBI:30616"/>
    </ligand>
</feature>
<feature type="binding site" evidence="3">
    <location>
        <position position="881"/>
    </location>
    <ligand>
        <name>ATP</name>
        <dbReference type="ChEBI" id="CHEBI:30616"/>
    </ligand>
</feature>
<feature type="binding site" evidence="3">
    <location>
        <position position="986"/>
    </location>
    <ligand>
        <name>ATP</name>
        <dbReference type="ChEBI" id="CHEBI:30616"/>
    </ligand>
</feature>
<feature type="binding site" evidence="3">
    <location>
        <position position="992"/>
    </location>
    <ligand>
        <name>ATP</name>
        <dbReference type="ChEBI" id="CHEBI:30616"/>
    </ligand>
</feature>
<feature type="binding site" evidence="7">
    <location>
        <position position="1012"/>
    </location>
    <ligand>
        <name>Mg(2+)</name>
        <dbReference type="ChEBI" id="CHEBI:18420"/>
    </ligand>
</feature>
<feature type="binding site" evidence="7">
    <location>
        <position position="1015"/>
    </location>
    <ligand>
        <name>ATP</name>
        <dbReference type="ChEBI" id="CHEBI:30616"/>
    </ligand>
</feature>
<feature type="binding site" evidence="3">
    <location>
        <position position="1016"/>
    </location>
    <ligand>
        <name>ATP</name>
        <dbReference type="ChEBI" id="CHEBI:30616"/>
    </ligand>
</feature>
<feature type="binding site" evidence="6">
    <location>
        <position position="1016"/>
    </location>
    <ligand>
        <name>Mg(2+)</name>
        <dbReference type="ChEBI" id="CHEBI:18420"/>
    </ligand>
</feature>
<feature type="binding site" evidence="2">
    <location>
        <position position="1275"/>
    </location>
    <ligand>
        <name>a 1,2-diacyl-sn-glycero-3-phospho-L-serine</name>
        <dbReference type="ChEBI" id="CHEBI:57262"/>
    </ligand>
</feature>
<feature type="site" description="Involved in the release of the transported lipid into the cytosolic leaflet" evidence="1">
    <location>
        <position position="517"/>
    </location>
</feature>
<evidence type="ECO:0000250" key="1">
    <source>
        <dbReference type="UniProtKB" id="C7EXK4"/>
    </source>
</evidence>
<evidence type="ECO:0000250" key="2">
    <source>
        <dbReference type="UniProtKB" id="G0S196"/>
    </source>
</evidence>
<evidence type="ECO:0000250" key="3">
    <source>
        <dbReference type="UniProtKB" id="P04191"/>
    </source>
</evidence>
<evidence type="ECO:0000250" key="4">
    <source>
        <dbReference type="UniProtKB" id="P32660"/>
    </source>
</evidence>
<evidence type="ECO:0000250" key="5">
    <source>
        <dbReference type="UniProtKB" id="P39524"/>
    </source>
</evidence>
<evidence type="ECO:0000250" key="6">
    <source>
        <dbReference type="UniProtKB" id="Q8NB49"/>
    </source>
</evidence>
<evidence type="ECO:0000250" key="7">
    <source>
        <dbReference type="UniProtKB" id="Q9Y2Q0"/>
    </source>
</evidence>
<evidence type="ECO:0000255" key="8"/>
<evidence type="ECO:0000269" key="9">
    <source>
    </source>
</evidence>
<evidence type="ECO:0000305" key="10"/>
<evidence type="ECO:0000312" key="11">
    <source>
        <dbReference type="PomBase" id="SPAC24B11.12c"/>
    </source>
</evidence>
<organism>
    <name type="scientific">Schizosaccharomyces pombe (strain 972 / ATCC 24843)</name>
    <name type="common">Fission yeast</name>
    <dbReference type="NCBI Taxonomy" id="284812"/>
    <lineage>
        <taxon>Eukaryota</taxon>
        <taxon>Fungi</taxon>
        <taxon>Dikarya</taxon>
        <taxon>Ascomycota</taxon>
        <taxon>Taphrinomycotina</taxon>
        <taxon>Schizosaccharomycetes</taxon>
        <taxon>Schizosaccharomycetales</taxon>
        <taxon>Schizosaccharomycetaceae</taxon>
        <taxon>Schizosaccharomyces</taxon>
    </lineage>
</organism>
<sequence>MESVEEKSKQRRWLPNFKALRLKVYRLADRLNIPLADAARVELEEYDGSDPQSLRGLQKLPRTLYFGLPLPDSELDDTGEAKRWFPRNKIRTAKYTPIDFIPKNIFLQFQNVANLFFLFLVILQSISIFGEQVNPGLAAVPLIVVVGITAVKDAIEDFRRTMLDIHLNNTPTLRLSHYQNPNIRTEYISYFRRFKKRISALFRVFLAKQEEKKRAKRLNDAVPLEDMAGSESRPSYDSIFRESFEAKRSFEDSKGKVPLSALDGTATILQSRPMDIIDYEAEATGECHFKKTYWKDVRVGDFVKVMDNDEIPADIVIINSSDPEGICYIETKNLDGETNLKMRHALTCGKNVVDEASCERCRFWIESEPPHANLYEYNGACKSFVHSEAGGSDTSQTVSEPISLDSMLLRGCVLRNTKWVIGVVVFTGDDTKIMLNSGAPPLKRSRITRNLNWNVYLNFIILFSMCFVCAVVEGIAWRGHSRSSYYFEFGSIGGSPAKDGVVTFFTGVILFQNLVPISLYISIEIVKTIQAIFIYFDKDMYYKKLKYACTPKSWNISDDLGQVEYIFSDKTGTLTQNVMEFKKCTINGVAYGEAFTEAMAGMAKREGKDTEELTLQKQSFIERDRMQMISQMRNMHDNKYLVDDNLTFISSQFVHDLAGKAGEEQSLACYEFFLALALCHSVVADRVGDRIVYKAQSPDEAALVGTARDVGFVFLDQRRDIMVTRALGETQRFKLMDTIEFSSARKRMSVIVKGPDNRYVLICKGADSIIFERLEPNEQVELRKTTSEHLRIFALEGLRTLCIAKRELTEEEYYEWKEKYDIAASAIENREEQIEEVADLIESHLTLLGGTAIEDRLQEGVPDSIALLAQAGIKLWVLTGDKMETAINIGFSCNLLDAGMDMIKFDVDQEVSTPELEVILADYLYRYFGLSGSVEELEAAKKDHDTPSGSHALVIDGSVLKRVLDGPMRTKFLLLCKRCKAVLCCRVSPAQKADVVQLVRESLEVMTLAIGDGANDVAMIQKADIGVGIVGEEGRAAAMSADYAIGQFRFLSKLVLVHGRWDYNRVAEMVNNFFYKSVVWTFTLFWYQIYNNFDANYLFDYTYVMLFNLIFSSLPVIVMGVYDQDVNADLSLRIPQLYKRGILQLNSARKIFIGYMLDGFYQSVICFFFSFLVINNVTTAAQNGRDTMAVQDLGVYVAAPTIMVVDTYVILNQSNWDVFSIGLWALSCLTFWFWTGVYSQSLYTYEFYKSASRIFRTPNFWAVLCGTIVSCLFPKFLFMTTQKLFWPYDVDIIRESYRTKRLHELDEEEEIENAEQSPDWASSTLQVPFNASSSSLATPKKEPLRLDTNSLTLTSSMPRSFTPSYTPSFLEGSPVFSDEILNRGEYMPHRGSISSSEQPLRP</sequence>
<accession>Q09891</accession>
<accession>Q9USC3</accession>
<keyword id="KW-0067">ATP-binding</keyword>
<keyword id="KW-1003">Cell membrane</keyword>
<keyword id="KW-0256">Endoplasmic reticulum</keyword>
<keyword id="KW-0445">Lipid transport</keyword>
<keyword id="KW-0460">Magnesium</keyword>
<keyword id="KW-0472">Membrane</keyword>
<keyword id="KW-0479">Metal-binding</keyword>
<keyword id="KW-0547">Nucleotide-binding</keyword>
<keyword id="KW-0597">Phosphoprotein</keyword>
<keyword id="KW-1185">Reference proteome</keyword>
<keyword id="KW-1278">Translocase</keyword>
<keyword id="KW-0812">Transmembrane</keyword>
<keyword id="KW-1133">Transmembrane helix</keyword>
<keyword id="KW-0813">Transport</keyword>
<comment type="function">
    <text evidence="4">Catalytic component of a P4-ATPase flippase complex which catalyzes the hydrolysis of ATP coupled to the transport of glucosylceramide, phosphatidylcholine, phosphatidylethanolamine, and small amounts of phosphatidylserine from the lumenal to the cytosolic leaflet of the cell membrane and ensures the maintenance of asymmetric distribution of phospholipids.</text>
</comment>
<comment type="catalytic activity">
    <reaction evidence="4">
        <text>ATP + H2O + phospholipidSide 1 = ADP + phosphate + phospholipidSide 2.</text>
        <dbReference type="EC" id="7.6.2.1"/>
    </reaction>
</comment>
<comment type="catalytic activity">
    <reaction evidence="4">
        <text>a 1,2-diacyl-sn-glycero-3-phosphoethanolamine(out) + ATP + H2O = a 1,2-diacyl-sn-glycero-3-phosphoethanolamine(in) + ADP + phosphate + H(+)</text>
        <dbReference type="Rhea" id="RHEA:66132"/>
        <dbReference type="ChEBI" id="CHEBI:15377"/>
        <dbReference type="ChEBI" id="CHEBI:15378"/>
        <dbReference type="ChEBI" id="CHEBI:30616"/>
        <dbReference type="ChEBI" id="CHEBI:43474"/>
        <dbReference type="ChEBI" id="CHEBI:64612"/>
        <dbReference type="ChEBI" id="CHEBI:456216"/>
    </reaction>
    <physiologicalReaction direction="left-to-right" evidence="4">
        <dbReference type="Rhea" id="RHEA:66133"/>
    </physiologicalReaction>
</comment>
<comment type="catalytic activity">
    <reaction evidence="4">
        <text>a 1,2-diacyl-sn-glycero-3-phosphocholine(out) + ATP + H2O = a 1,2-diacyl-sn-glycero-3-phosphocholine(in) + ADP + phosphate + H(+)</text>
        <dbReference type="Rhea" id="RHEA:38583"/>
        <dbReference type="ChEBI" id="CHEBI:15377"/>
        <dbReference type="ChEBI" id="CHEBI:15378"/>
        <dbReference type="ChEBI" id="CHEBI:30616"/>
        <dbReference type="ChEBI" id="CHEBI:43474"/>
        <dbReference type="ChEBI" id="CHEBI:57643"/>
        <dbReference type="ChEBI" id="CHEBI:456216"/>
    </reaction>
    <physiologicalReaction direction="left-to-right" evidence="4">
        <dbReference type="Rhea" id="RHEA:38584"/>
    </physiologicalReaction>
</comment>
<comment type="catalytic activity">
    <reaction evidence="4">
        <text>a beta-D-glucosyl-(1&lt;-&gt;1')-N-acylsphing-4-enine(out) + ATP + H2O = a beta-D-glucosyl-(1&lt;-&gt;1')-N-acylsphing-4-enine(in) + ADP + phosphate + H(+)</text>
        <dbReference type="Rhea" id="RHEA:66036"/>
        <dbReference type="ChEBI" id="CHEBI:15377"/>
        <dbReference type="ChEBI" id="CHEBI:15378"/>
        <dbReference type="ChEBI" id="CHEBI:22801"/>
        <dbReference type="ChEBI" id="CHEBI:30616"/>
        <dbReference type="ChEBI" id="CHEBI:43474"/>
        <dbReference type="ChEBI" id="CHEBI:456216"/>
    </reaction>
    <physiologicalReaction direction="left-to-right" evidence="4">
        <dbReference type="Rhea" id="RHEA:66037"/>
    </physiologicalReaction>
</comment>
<comment type="catalytic activity">
    <reaction evidence="4">
        <text>a 1,2-diacyl-sn-glycero-3-phospho-L-serine(out) + ATP + H2O = a 1,2-diacyl-sn-glycero-3-phospho-L-serine(in) + ADP + phosphate + H(+)</text>
        <dbReference type="Rhea" id="RHEA:38567"/>
        <dbReference type="ChEBI" id="CHEBI:15377"/>
        <dbReference type="ChEBI" id="CHEBI:15378"/>
        <dbReference type="ChEBI" id="CHEBI:30616"/>
        <dbReference type="ChEBI" id="CHEBI:43474"/>
        <dbReference type="ChEBI" id="CHEBI:57262"/>
        <dbReference type="ChEBI" id="CHEBI:456216"/>
    </reaction>
    <physiologicalReaction direction="left-to-right" evidence="4">
        <dbReference type="Rhea" id="RHEA:38568"/>
    </physiologicalReaction>
</comment>
<comment type="cofactor">
    <cofactor evidence="5">
        <name>Mg(2+)</name>
        <dbReference type="ChEBI" id="CHEBI:18420"/>
    </cofactor>
</comment>
<comment type="subcellular location">
    <subcellularLocation>
        <location evidence="4">Cell membrane</location>
        <topology evidence="8">Multi-pass membrane protein</topology>
    </subcellularLocation>
    <subcellularLocation>
        <location evidence="9">Endoplasmic reticulum membrane</location>
        <topology evidence="8">Multi-pass membrane protein</topology>
    </subcellularLocation>
</comment>
<comment type="similarity">
    <text evidence="10">Belongs to the cation transport ATPase (P-type) (TC 3.A.3) family. Type IV subfamily.</text>
</comment>